<sequence>MDHRLLEIVACPVCNGKLYFNKENLELVCKVDNLAYPVRDGIPVLLENEARPLSIDEKHA</sequence>
<evidence type="ECO:0000255" key="1">
    <source>
        <dbReference type="HAMAP-Rule" id="MF_01187"/>
    </source>
</evidence>
<proteinExistence type="inferred from homology"/>
<comment type="similarity">
    <text evidence="1">Belongs to the UPF0434 family.</text>
</comment>
<organism>
    <name type="scientific">Yersinia pestis bv. Antiqua (strain Nepal516)</name>
    <dbReference type="NCBI Taxonomy" id="377628"/>
    <lineage>
        <taxon>Bacteria</taxon>
        <taxon>Pseudomonadati</taxon>
        <taxon>Pseudomonadota</taxon>
        <taxon>Gammaproteobacteria</taxon>
        <taxon>Enterobacterales</taxon>
        <taxon>Yersiniaceae</taxon>
        <taxon>Yersinia</taxon>
    </lineage>
</organism>
<dbReference type="EMBL" id="CP000305">
    <property type="protein sequence ID" value="ABG18906.1"/>
    <property type="molecule type" value="Genomic_DNA"/>
</dbReference>
<dbReference type="EMBL" id="ACNQ01000017">
    <property type="protein sequence ID" value="EEO75019.1"/>
    <property type="molecule type" value="Genomic_DNA"/>
</dbReference>
<dbReference type="RefSeq" id="WP_002211315.1">
    <property type="nucleotide sequence ID" value="NZ_ACNQ01000017.1"/>
</dbReference>
<dbReference type="SMR" id="Q1CGH4"/>
<dbReference type="KEGG" id="ypn:YPN_2578"/>
<dbReference type="HOGENOM" id="CLU_155659_3_1_6"/>
<dbReference type="Proteomes" id="UP000008936">
    <property type="component" value="Chromosome"/>
</dbReference>
<dbReference type="GO" id="GO:0005829">
    <property type="term" value="C:cytosol"/>
    <property type="evidence" value="ECO:0007669"/>
    <property type="project" value="TreeGrafter"/>
</dbReference>
<dbReference type="FunFam" id="2.20.25.10:FF:000002">
    <property type="entry name" value="UPF0434 protein YcaR"/>
    <property type="match status" value="1"/>
</dbReference>
<dbReference type="Gene3D" id="2.20.25.10">
    <property type="match status" value="1"/>
</dbReference>
<dbReference type="HAMAP" id="MF_01187">
    <property type="entry name" value="UPF0434"/>
    <property type="match status" value="1"/>
</dbReference>
<dbReference type="InterPro" id="IPR005651">
    <property type="entry name" value="Trm112-like"/>
</dbReference>
<dbReference type="PANTHER" id="PTHR33505:SF4">
    <property type="entry name" value="PROTEIN PREY, MITOCHONDRIAL"/>
    <property type="match status" value="1"/>
</dbReference>
<dbReference type="PANTHER" id="PTHR33505">
    <property type="entry name" value="ZGC:162634"/>
    <property type="match status" value="1"/>
</dbReference>
<dbReference type="Pfam" id="PF03966">
    <property type="entry name" value="Trm112p"/>
    <property type="match status" value="1"/>
</dbReference>
<dbReference type="SUPFAM" id="SSF158997">
    <property type="entry name" value="Trm112p-like"/>
    <property type="match status" value="1"/>
</dbReference>
<accession>Q1CGH4</accession>
<accession>C4GVR9</accession>
<gene>
    <name type="ordered locus">YPN_2578</name>
    <name type="ORF">YP516_2904</name>
</gene>
<feature type="chain" id="PRO_0000291188" description="UPF0434 protein YPN_2578">
    <location>
        <begin position="1"/>
        <end position="60"/>
    </location>
</feature>
<protein>
    <recommendedName>
        <fullName evidence="1">UPF0434 protein YPN_2578</fullName>
    </recommendedName>
</protein>
<reference key="1">
    <citation type="journal article" date="2006" name="J. Bacteriol.">
        <title>Complete genome sequence of Yersinia pestis strains Antiqua and Nepal516: evidence of gene reduction in an emerging pathogen.</title>
        <authorList>
            <person name="Chain P.S.G."/>
            <person name="Hu P."/>
            <person name="Malfatti S.A."/>
            <person name="Radnedge L."/>
            <person name="Larimer F."/>
            <person name="Vergez L.M."/>
            <person name="Worsham P."/>
            <person name="Chu M.C."/>
            <person name="Andersen G.L."/>
        </authorList>
    </citation>
    <scope>NUCLEOTIDE SEQUENCE [LARGE SCALE GENOMIC DNA]</scope>
    <source>
        <strain>Nepal516</strain>
    </source>
</reference>
<reference key="2">
    <citation type="submission" date="2009-04" db="EMBL/GenBank/DDBJ databases">
        <title>Yersinia pestis Nepal516A whole genome shotgun sequencing project.</title>
        <authorList>
            <person name="Plunkett G. III"/>
            <person name="Anderson B.D."/>
            <person name="Baumler D.J."/>
            <person name="Burland V."/>
            <person name="Cabot E.L."/>
            <person name="Glasner J.D."/>
            <person name="Mau B."/>
            <person name="Neeno-Eckwall E."/>
            <person name="Perna N.T."/>
            <person name="Munk A.C."/>
            <person name="Tapia R."/>
            <person name="Green L.D."/>
            <person name="Rogers Y.C."/>
            <person name="Detter J.C."/>
            <person name="Bruce D.C."/>
            <person name="Brettin T.S."/>
        </authorList>
    </citation>
    <scope>NUCLEOTIDE SEQUENCE [LARGE SCALE GENOMIC DNA]</scope>
    <source>
        <strain>Nepal516</strain>
    </source>
</reference>
<name>Y2578_YERPN</name>